<evidence type="ECO:0000255" key="1">
    <source>
        <dbReference type="HAMAP-Rule" id="MF_00012"/>
    </source>
</evidence>
<evidence type="ECO:0000305" key="2"/>
<protein>
    <recommendedName>
        <fullName evidence="1">Dihydroxy-acid dehydratase</fullName>
        <shortName evidence="1">DAD</shortName>
        <ecNumber evidence="1">4.2.1.9</ecNumber>
    </recommendedName>
</protein>
<dbReference type="EC" id="4.2.1.9" evidence="1"/>
<dbReference type="EMBL" id="CR378674">
    <property type="protein sequence ID" value="CAG21851.1"/>
    <property type="status" value="ALT_INIT"/>
    <property type="molecule type" value="Genomic_DNA"/>
</dbReference>
<dbReference type="RefSeq" id="WP_011220087.1">
    <property type="nucleotide sequence ID" value="NC_006370.1"/>
</dbReference>
<dbReference type="SMR" id="Q6LLH7"/>
<dbReference type="STRING" id="298386.PBPRA3595"/>
<dbReference type="KEGG" id="ppr:PBPRA3595"/>
<dbReference type="eggNOG" id="COG0129">
    <property type="taxonomic scope" value="Bacteria"/>
</dbReference>
<dbReference type="HOGENOM" id="CLU_014271_4_2_6"/>
<dbReference type="UniPathway" id="UPA00047">
    <property type="reaction ID" value="UER00057"/>
</dbReference>
<dbReference type="UniPathway" id="UPA00049">
    <property type="reaction ID" value="UER00061"/>
</dbReference>
<dbReference type="Proteomes" id="UP000000593">
    <property type="component" value="Chromosome 1"/>
</dbReference>
<dbReference type="GO" id="GO:0005829">
    <property type="term" value="C:cytosol"/>
    <property type="evidence" value="ECO:0007669"/>
    <property type="project" value="TreeGrafter"/>
</dbReference>
<dbReference type="GO" id="GO:0051537">
    <property type="term" value="F:2 iron, 2 sulfur cluster binding"/>
    <property type="evidence" value="ECO:0007669"/>
    <property type="project" value="UniProtKB-UniRule"/>
</dbReference>
<dbReference type="GO" id="GO:0004160">
    <property type="term" value="F:dihydroxy-acid dehydratase activity"/>
    <property type="evidence" value="ECO:0007669"/>
    <property type="project" value="UniProtKB-UniRule"/>
</dbReference>
<dbReference type="GO" id="GO:0000287">
    <property type="term" value="F:magnesium ion binding"/>
    <property type="evidence" value="ECO:0007669"/>
    <property type="project" value="UniProtKB-UniRule"/>
</dbReference>
<dbReference type="GO" id="GO:0009097">
    <property type="term" value="P:isoleucine biosynthetic process"/>
    <property type="evidence" value="ECO:0007669"/>
    <property type="project" value="UniProtKB-UniRule"/>
</dbReference>
<dbReference type="GO" id="GO:0009099">
    <property type="term" value="P:L-valine biosynthetic process"/>
    <property type="evidence" value="ECO:0007669"/>
    <property type="project" value="UniProtKB-UniRule"/>
</dbReference>
<dbReference type="FunFam" id="3.50.30.80:FF:000001">
    <property type="entry name" value="Dihydroxy-acid dehydratase"/>
    <property type="match status" value="1"/>
</dbReference>
<dbReference type="Gene3D" id="3.50.30.80">
    <property type="entry name" value="IlvD/EDD C-terminal domain-like"/>
    <property type="match status" value="1"/>
</dbReference>
<dbReference type="HAMAP" id="MF_00012">
    <property type="entry name" value="IlvD"/>
    <property type="match status" value="1"/>
</dbReference>
<dbReference type="InterPro" id="IPR042096">
    <property type="entry name" value="Dihydro-acid_dehy_C"/>
</dbReference>
<dbReference type="InterPro" id="IPR004404">
    <property type="entry name" value="DihydroxyA_deHydtase"/>
</dbReference>
<dbReference type="InterPro" id="IPR020558">
    <property type="entry name" value="DiOHA_6PGluconate_deHydtase_CS"/>
</dbReference>
<dbReference type="InterPro" id="IPR056740">
    <property type="entry name" value="ILV_EDD_C"/>
</dbReference>
<dbReference type="InterPro" id="IPR000581">
    <property type="entry name" value="ILV_EDD_N"/>
</dbReference>
<dbReference type="InterPro" id="IPR037237">
    <property type="entry name" value="IlvD/EDD_N"/>
</dbReference>
<dbReference type="NCBIfam" id="TIGR00110">
    <property type="entry name" value="ilvD"/>
    <property type="match status" value="1"/>
</dbReference>
<dbReference type="NCBIfam" id="NF009103">
    <property type="entry name" value="PRK12448.1"/>
    <property type="match status" value="1"/>
</dbReference>
<dbReference type="PANTHER" id="PTHR43661">
    <property type="entry name" value="D-XYLONATE DEHYDRATASE"/>
    <property type="match status" value="1"/>
</dbReference>
<dbReference type="PANTHER" id="PTHR43661:SF3">
    <property type="entry name" value="D-XYLONATE DEHYDRATASE YAGF-RELATED"/>
    <property type="match status" value="1"/>
</dbReference>
<dbReference type="Pfam" id="PF24877">
    <property type="entry name" value="ILV_EDD_C"/>
    <property type="match status" value="1"/>
</dbReference>
<dbReference type="Pfam" id="PF00920">
    <property type="entry name" value="ILVD_EDD_N"/>
    <property type="match status" value="1"/>
</dbReference>
<dbReference type="SUPFAM" id="SSF143975">
    <property type="entry name" value="IlvD/EDD N-terminal domain-like"/>
    <property type="match status" value="1"/>
</dbReference>
<dbReference type="SUPFAM" id="SSF52016">
    <property type="entry name" value="LeuD/IlvD-like"/>
    <property type="match status" value="1"/>
</dbReference>
<dbReference type="PROSITE" id="PS00886">
    <property type="entry name" value="ILVD_EDD_1"/>
    <property type="match status" value="1"/>
</dbReference>
<dbReference type="PROSITE" id="PS00887">
    <property type="entry name" value="ILVD_EDD_2"/>
    <property type="match status" value="1"/>
</dbReference>
<name>ILVD_PHOPR</name>
<reference key="1">
    <citation type="journal article" date="2005" name="Science">
        <title>Life at depth: Photobacterium profundum genome sequence and expression analysis.</title>
        <authorList>
            <person name="Vezzi A."/>
            <person name="Campanaro S."/>
            <person name="D'Angelo M."/>
            <person name="Simonato F."/>
            <person name="Vitulo N."/>
            <person name="Lauro F.M."/>
            <person name="Cestaro A."/>
            <person name="Malacrida G."/>
            <person name="Simionati B."/>
            <person name="Cannata N."/>
            <person name="Romualdi C."/>
            <person name="Bartlett D.H."/>
            <person name="Valle G."/>
        </authorList>
    </citation>
    <scope>NUCLEOTIDE SEQUENCE [LARGE SCALE GENOMIC DNA]</scope>
    <source>
        <strain>ATCC BAA-1253 / SS9</strain>
    </source>
</reference>
<proteinExistence type="inferred from homology"/>
<feature type="chain" id="PRO_0000225406" description="Dihydroxy-acid dehydratase">
    <location>
        <begin position="1"/>
        <end position="613"/>
    </location>
</feature>
<feature type="active site" description="Proton acceptor" evidence="1">
    <location>
        <position position="517"/>
    </location>
</feature>
<feature type="binding site" evidence="1">
    <location>
        <position position="81"/>
    </location>
    <ligand>
        <name>Mg(2+)</name>
        <dbReference type="ChEBI" id="CHEBI:18420"/>
    </ligand>
</feature>
<feature type="binding site" evidence="1">
    <location>
        <position position="122"/>
    </location>
    <ligand>
        <name>[2Fe-2S] cluster</name>
        <dbReference type="ChEBI" id="CHEBI:190135"/>
    </ligand>
</feature>
<feature type="binding site" evidence="1">
    <location>
        <position position="123"/>
    </location>
    <ligand>
        <name>Mg(2+)</name>
        <dbReference type="ChEBI" id="CHEBI:18420"/>
    </ligand>
</feature>
<feature type="binding site" description="via carbamate group" evidence="1">
    <location>
        <position position="124"/>
    </location>
    <ligand>
        <name>Mg(2+)</name>
        <dbReference type="ChEBI" id="CHEBI:18420"/>
    </ligand>
</feature>
<feature type="binding site" evidence="1">
    <location>
        <position position="195"/>
    </location>
    <ligand>
        <name>[2Fe-2S] cluster</name>
        <dbReference type="ChEBI" id="CHEBI:190135"/>
    </ligand>
</feature>
<feature type="binding site" evidence="1">
    <location>
        <position position="491"/>
    </location>
    <ligand>
        <name>Mg(2+)</name>
        <dbReference type="ChEBI" id="CHEBI:18420"/>
    </ligand>
</feature>
<feature type="modified residue" description="N6-carboxylysine" evidence="1">
    <location>
        <position position="124"/>
    </location>
</feature>
<sequence>MPKYRSATTTHGRNMAGARALWRATGVKDEDFGKPIIAVVNSFTQFVPGHVHLKDMGQLVAGEIEKAGGIAKEFNTIAVDDGIAMGHGGMLYSLPSRELIADSVEYMVNAHCADAMVCISNCDKITPGMLMAALRLNIPVIFVSGGPMEAGKTKLSDQILKLDLVDAMIQGADPTVSDEQSEQIERSACPTCGSCSGMFTANSMNCLTEALGLSQPGNGSMLATHADREQLFINAGKRIVDLTKRYYLNDDDTALPRNIANKKAFENAMALDIAMGGSTNTVLHLLAAAKEGDIDFDMDDIDRMSRLIPHLCKVAPSTPKYHMEDVHRAGGVYSILGELDRAGLLHNDTHNILGQTFAESLAEYDIAVTESQAVKDFFRAGPAGIRTTKAFSQSCRWDTLDDDRTNGCIRSKEHAFSQDGGLAVLSGNIAIKGCIVKTAGVDENSLVFSGPAVVFESQDTAVEGILGGKVKSGDVVVIRYEGPKGGPGMQEMLYPTTYLKSIGLGKECALITDGRFSGGTSGLSIGHVSPEAAAGGTIGLVNDGDIINIDIPNRSIELHVDDTELAQRRATADQQGWKPVNRQREVSYALRAYALLATSADQGAIRDKSKLEG</sequence>
<organism>
    <name type="scientific">Photobacterium profundum (strain SS9)</name>
    <dbReference type="NCBI Taxonomy" id="298386"/>
    <lineage>
        <taxon>Bacteria</taxon>
        <taxon>Pseudomonadati</taxon>
        <taxon>Pseudomonadota</taxon>
        <taxon>Gammaproteobacteria</taxon>
        <taxon>Vibrionales</taxon>
        <taxon>Vibrionaceae</taxon>
        <taxon>Photobacterium</taxon>
    </lineage>
</organism>
<comment type="function">
    <text evidence="1">Functions in the biosynthesis of branched-chain amino acids. Catalyzes the dehydration of (2R,3R)-2,3-dihydroxy-3-methylpentanoate (2,3-dihydroxy-3-methylvalerate) into 2-oxo-3-methylpentanoate (2-oxo-3-methylvalerate) and of (2R)-2,3-dihydroxy-3-methylbutanoate (2,3-dihydroxyisovalerate) into 2-oxo-3-methylbutanoate (2-oxoisovalerate), the penultimate precursor to L-isoleucine and L-valine, respectively.</text>
</comment>
<comment type="catalytic activity">
    <reaction evidence="1">
        <text>(2R)-2,3-dihydroxy-3-methylbutanoate = 3-methyl-2-oxobutanoate + H2O</text>
        <dbReference type="Rhea" id="RHEA:24809"/>
        <dbReference type="ChEBI" id="CHEBI:11851"/>
        <dbReference type="ChEBI" id="CHEBI:15377"/>
        <dbReference type="ChEBI" id="CHEBI:49072"/>
        <dbReference type="EC" id="4.2.1.9"/>
    </reaction>
    <physiologicalReaction direction="left-to-right" evidence="1">
        <dbReference type="Rhea" id="RHEA:24810"/>
    </physiologicalReaction>
</comment>
<comment type="catalytic activity">
    <reaction evidence="1">
        <text>(2R,3R)-2,3-dihydroxy-3-methylpentanoate = (S)-3-methyl-2-oxopentanoate + H2O</text>
        <dbReference type="Rhea" id="RHEA:27694"/>
        <dbReference type="ChEBI" id="CHEBI:15377"/>
        <dbReference type="ChEBI" id="CHEBI:35146"/>
        <dbReference type="ChEBI" id="CHEBI:49258"/>
        <dbReference type="EC" id="4.2.1.9"/>
    </reaction>
    <physiologicalReaction direction="left-to-right" evidence="1">
        <dbReference type="Rhea" id="RHEA:27695"/>
    </physiologicalReaction>
</comment>
<comment type="cofactor">
    <cofactor evidence="1">
        <name>[2Fe-2S] cluster</name>
        <dbReference type="ChEBI" id="CHEBI:190135"/>
    </cofactor>
    <text evidence="1">Binds 1 [2Fe-2S] cluster per subunit. This cluster acts as a Lewis acid cofactor.</text>
</comment>
<comment type="cofactor">
    <cofactor evidence="1">
        <name>Mg(2+)</name>
        <dbReference type="ChEBI" id="CHEBI:18420"/>
    </cofactor>
</comment>
<comment type="pathway">
    <text evidence="1">Amino-acid biosynthesis; L-isoleucine biosynthesis; L-isoleucine from 2-oxobutanoate: step 3/4.</text>
</comment>
<comment type="pathway">
    <text evidence="1">Amino-acid biosynthesis; L-valine biosynthesis; L-valine from pyruvate: step 3/4.</text>
</comment>
<comment type="subunit">
    <text evidence="1">Homodimer.</text>
</comment>
<comment type="similarity">
    <text evidence="1">Belongs to the IlvD/Edd family.</text>
</comment>
<comment type="sequence caution" evidence="2">
    <conflict type="erroneous initiation">
        <sequence resource="EMBL-CDS" id="CAG21851"/>
    </conflict>
</comment>
<gene>
    <name evidence="1" type="primary">ilvD</name>
    <name type="ordered locus">PBPRA3595</name>
</gene>
<accession>Q6LLH7</accession>
<keyword id="KW-0001">2Fe-2S</keyword>
<keyword id="KW-0028">Amino-acid biosynthesis</keyword>
<keyword id="KW-0100">Branched-chain amino acid biosynthesis</keyword>
<keyword id="KW-0408">Iron</keyword>
<keyword id="KW-0411">Iron-sulfur</keyword>
<keyword id="KW-0456">Lyase</keyword>
<keyword id="KW-0460">Magnesium</keyword>
<keyword id="KW-0479">Metal-binding</keyword>
<keyword id="KW-1185">Reference proteome</keyword>